<evidence type="ECO:0000255" key="1">
    <source>
        <dbReference type="HAMAP-Rule" id="MF_00193"/>
    </source>
</evidence>
<geneLocation type="plasmid">
    <name>pSymB</name>
    <name>megaplasmid 2</name>
</geneLocation>
<name>NADE_RHIME</name>
<proteinExistence type="inferred from homology"/>
<gene>
    <name evidence="1" type="primary">nadE</name>
    <name type="synonym">nadE1</name>
    <name type="ordered locus">RB1357</name>
    <name type="ORF">SMb20649</name>
</gene>
<reference key="1">
    <citation type="journal article" date="2001" name="Proc. Natl. Acad. Sci. U.S.A.">
        <title>The complete sequence of the 1,683-kb pSymB megaplasmid from the N2-fixing endosymbiont Sinorhizobium meliloti.</title>
        <authorList>
            <person name="Finan T.M."/>
            <person name="Weidner S."/>
            <person name="Wong K."/>
            <person name="Buhrmester J."/>
            <person name="Chain P."/>
            <person name="Vorhoelter F.J."/>
            <person name="Hernandez-Lucas I."/>
            <person name="Becker A."/>
            <person name="Cowie A."/>
            <person name="Gouzy J."/>
            <person name="Golding B."/>
            <person name="Puehler A."/>
        </authorList>
    </citation>
    <scope>NUCLEOTIDE SEQUENCE [LARGE SCALE GENOMIC DNA]</scope>
    <source>
        <strain>1021</strain>
    </source>
</reference>
<reference key="2">
    <citation type="journal article" date="2001" name="Science">
        <title>The composite genome of the legume symbiont Sinorhizobium meliloti.</title>
        <authorList>
            <person name="Galibert F."/>
            <person name="Finan T.M."/>
            <person name="Long S.R."/>
            <person name="Puehler A."/>
            <person name="Abola P."/>
            <person name="Ampe F."/>
            <person name="Barloy-Hubler F."/>
            <person name="Barnett M.J."/>
            <person name="Becker A."/>
            <person name="Boistard P."/>
            <person name="Bothe G."/>
            <person name="Boutry M."/>
            <person name="Bowser L."/>
            <person name="Buhrmester J."/>
            <person name="Cadieu E."/>
            <person name="Capela D."/>
            <person name="Chain P."/>
            <person name="Cowie A."/>
            <person name="Davis R.W."/>
            <person name="Dreano S."/>
            <person name="Federspiel N.A."/>
            <person name="Fisher R.F."/>
            <person name="Gloux S."/>
            <person name="Godrie T."/>
            <person name="Goffeau A."/>
            <person name="Golding B."/>
            <person name="Gouzy J."/>
            <person name="Gurjal M."/>
            <person name="Hernandez-Lucas I."/>
            <person name="Hong A."/>
            <person name="Huizar L."/>
            <person name="Hyman R.W."/>
            <person name="Jones T."/>
            <person name="Kahn D."/>
            <person name="Kahn M.L."/>
            <person name="Kalman S."/>
            <person name="Keating D.H."/>
            <person name="Kiss E."/>
            <person name="Komp C."/>
            <person name="Lelaure V."/>
            <person name="Masuy D."/>
            <person name="Palm C."/>
            <person name="Peck M.C."/>
            <person name="Pohl T.M."/>
            <person name="Portetelle D."/>
            <person name="Purnelle B."/>
            <person name="Ramsperger U."/>
            <person name="Surzycki R."/>
            <person name="Thebault P."/>
            <person name="Vandenbol M."/>
            <person name="Vorhoelter F.J."/>
            <person name="Weidner S."/>
            <person name="Wells D.H."/>
            <person name="Wong K."/>
            <person name="Yeh K.-C."/>
            <person name="Batut J."/>
        </authorList>
    </citation>
    <scope>NUCLEOTIDE SEQUENCE [LARGE SCALE GENOMIC DNA]</scope>
    <source>
        <strain>1021</strain>
    </source>
</reference>
<accession>Q92TY6</accession>
<feature type="chain" id="PRO_0000152189" description="NH(3)-dependent NAD(+) synthetase">
    <location>
        <begin position="1"/>
        <end position="334"/>
    </location>
</feature>
<feature type="binding site" evidence="1">
    <location>
        <begin position="47"/>
        <end position="54"/>
    </location>
    <ligand>
        <name>ATP</name>
        <dbReference type="ChEBI" id="CHEBI:30616"/>
    </ligand>
</feature>
<feature type="binding site" evidence="1">
    <location>
        <position position="53"/>
    </location>
    <ligand>
        <name>Mg(2+)</name>
        <dbReference type="ChEBI" id="CHEBI:18420"/>
    </ligand>
</feature>
<feature type="binding site" evidence="1">
    <location>
        <position position="183"/>
    </location>
    <ligand>
        <name>deamido-NAD(+)</name>
        <dbReference type="ChEBI" id="CHEBI:58437"/>
    </ligand>
</feature>
<feature type="binding site" evidence="1">
    <location>
        <position position="203"/>
    </location>
    <ligand>
        <name>ATP</name>
        <dbReference type="ChEBI" id="CHEBI:30616"/>
    </ligand>
</feature>
<feature type="binding site" evidence="1">
    <location>
        <position position="208"/>
    </location>
    <ligand>
        <name>Mg(2+)</name>
        <dbReference type="ChEBI" id="CHEBI:18420"/>
    </ligand>
</feature>
<feature type="binding site" evidence="1">
    <location>
        <position position="216"/>
    </location>
    <ligand>
        <name>deamido-NAD(+)</name>
        <dbReference type="ChEBI" id="CHEBI:58437"/>
    </ligand>
</feature>
<feature type="binding site" evidence="1">
    <location>
        <position position="223"/>
    </location>
    <ligand>
        <name>deamido-NAD(+)</name>
        <dbReference type="ChEBI" id="CHEBI:58437"/>
    </ligand>
</feature>
<feature type="binding site" evidence="1">
    <location>
        <position position="232"/>
    </location>
    <ligand>
        <name>ATP</name>
        <dbReference type="ChEBI" id="CHEBI:30616"/>
    </ligand>
</feature>
<feature type="binding site" evidence="1">
    <location>
        <position position="254"/>
    </location>
    <ligand>
        <name>ATP</name>
        <dbReference type="ChEBI" id="CHEBI:30616"/>
    </ligand>
</feature>
<comment type="function">
    <text evidence="1">Catalyzes the ATP-dependent amidation of deamido-NAD to form NAD. Uses ammonia as a nitrogen source.</text>
</comment>
<comment type="catalytic activity">
    <reaction evidence="1">
        <text>deamido-NAD(+) + NH4(+) + ATP = AMP + diphosphate + NAD(+) + H(+)</text>
        <dbReference type="Rhea" id="RHEA:21188"/>
        <dbReference type="ChEBI" id="CHEBI:15378"/>
        <dbReference type="ChEBI" id="CHEBI:28938"/>
        <dbReference type="ChEBI" id="CHEBI:30616"/>
        <dbReference type="ChEBI" id="CHEBI:33019"/>
        <dbReference type="ChEBI" id="CHEBI:57540"/>
        <dbReference type="ChEBI" id="CHEBI:58437"/>
        <dbReference type="ChEBI" id="CHEBI:456215"/>
        <dbReference type="EC" id="6.3.1.5"/>
    </reaction>
</comment>
<comment type="pathway">
    <text evidence="1">Cofactor biosynthesis; NAD(+) biosynthesis; NAD(+) from deamido-NAD(+) (ammonia route): step 1/1.</text>
</comment>
<comment type="subunit">
    <text evidence="1">Homodimer.</text>
</comment>
<comment type="similarity">
    <text evidence="1">Belongs to the NAD synthetase family.</text>
</comment>
<keyword id="KW-0067">ATP-binding</keyword>
<keyword id="KW-0436">Ligase</keyword>
<keyword id="KW-0460">Magnesium</keyword>
<keyword id="KW-0479">Metal-binding</keyword>
<keyword id="KW-0520">NAD</keyword>
<keyword id="KW-0547">Nucleotide-binding</keyword>
<keyword id="KW-0614">Plasmid</keyword>
<keyword id="KW-1185">Reference proteome</keyword>
<protein>
    <recommendedName>
        <fullName evidence="1">NH(3)-dependent NAD(+) synthetase</fullName>
        <ecNumber evidence="1">6.3.1.5</ecNumber>
    </recommendedName>
</protein>
<organism>
    <name type="scientific">Rhizobium meliloti (strain 1021)</name>
    <name type="common">Ensifer meliloti</name>
    <name type="synonym">Sinorhizobium meliloti</name>
    <dbReference type="NCBI Taxonomy" id="266834"/>
    <lineage>
        <taxon>Bacteria</taxon>
        <taxon>Pseudomonadati</taxon>
        <taxon>Pseudomonadota</taxon>
        <taxon>Alphaproteobacteria</taxon>
        <taxon>Hyphomicrobiales</taxon>
        <taxon>Rhizobiaceae</taxon>
        <taxon>Sinorhizobium/Ensifer group</taxon>
        <taxon>Sinorhizobium</taxon>
    </lineage>
</organism>
<sequence length="334" mass="36913">MNIRPDQNRLVFSADTLKIDEAAEADRIVAGLRAQLRSLRKRGLVLGLSGGIDSSVSVALAVRAVGAKNVFCLFMPENDSDPESLRLGRLVAETFGVEAVVEDIGPTLDAMGCYQRRDAFIRELVPDYGPGWASKIVIANALEGDGYNISSLVVQDPEGKQTKLRMPPSVYLGIVAATNMKQRTRKQIEYYHADRLNFAVLGTPNRLEYDQGFFVKNGDGAADVKPIAHLYKSQVYALAGHLGIPEEIRRRPPTTDTYSLEQTQEEFYFSLPYDRMDLCLFGLNNGLSADEVGRAANLGVAQVKRVWADIAAKRKATRYLHLGPQLVQPVEEIE</sequence>
<dbReference type="EC" id="6.3.1.5" evidence="1"/>
<dbReference type="EMBL" id="AL591985">
    <property type="protein sequence ID" value="CAC49757.1"/>
    <property type="molecule type" value="Genomic_DNA"/>
</dbReference>
<dbReference type="PIR" id="E96011">
    <property type="entry name" value="E96011"/>
</dbReference>
<dbReference type="RefSeq" id="NP_437897.1">
    <property type="nucleotide sequence ID" value="NC_003078.1"/>
</dbReference>
<dbReference type="RefSeq" id="WP_010976175.1">
    <property type="nucleotide sequence ID" value="NC_003078.1"/>
</dbReference>
<dbReference type="SMR" id="Q92TY6"/>
<dbReference type="EnsemblBacteria" id="CAC49757">
    <property type="protein sequence ID" value="CAC49757"/>
    <property type="gene ID" value="SM_b20649"/>
</dbReference>
<dbReference type="GeneID" id="89577574"/>
<dbReference type="KEGG" id="sme:SM_b20649"/>
<dbReference type="PATRIC" id="fig|266834.11.peg.6277"/>
<dbReference type="eggNOG" id="COG0171">
    <property type="taxonomic scope" value="Bacteria"/>
</dbReference>
<dbReference type="HOGENOM" id="CLU_059327_0_0_5"/>
<dbReference type="OrthoDB" id="3266517at2"/>
<dbReference type="UniPathway" id="UPA00253">
    <property type="reaction ID" value="UER00333"/>
</dbReference>
<dbReference type="Proteomes" id="UP000001976">
    <property type="component" value="Plasmid pSymB"/>
</dbReference>
<dbReference type="GO" id="GO:0005737">
    <property type="term" value="C:cytoplasm"/>
    <property type="evidence" value="ECO:0007669"/>
    <property type="project" value="InterPro"/>
</dbReference>
<dbReference type="GO" id="GO:0005524">
    <property type="term" value="F:ATP binding"/>
    <property type="evidence" value="ECO:0007669"/>
    <property type="project" value="UniProtKB-UniRule"/>
</dbReference>
<dbReference type="GO" id="GO:0004359">
    <property type="term" value="F:glutaminase activity"/>
    <property type="evidence" value="ECO:0007669"/>
    <property type="project" value="InterPro"/>
</dbReference>
<dbReference type="GO" id="GO:0046872">
    <property type="term" value="F:metal ion binding"/>
    <property type="evidence" value="ECO:0007669"/>
    <property type="project" value="UniProtKB-KW"/>
</dbReference>
<dbReference type="GO" id="GO:0003952">
    <property type="term" value="F:NAD+ synthase (glutamine-hydrolyzing) activity"/>
    <property type="evidence" value="ECO:0007669"/>
    <property type="project" value="InterPro"/>
</dbReference>
<dbReference type="GO" id="GO:0008795">
    <property type="term" value="F:NAD+ synthase activity"/>
    <property type="evidence" value="ECO:0007669"/>
    <property type="project" value="UniProtKB-UniRule"/>
</dbReference>
<dbReference type="GO" id="GO:0009435">
    <property type="term" value="P:NAD biosynthetic process"/>
    <property type="evidence" value="ECO:0007669"/>
    <property type="project" value="UniProtKB-UniRule"/>
</dbReference>
<dbReference type="CDD" id="cd00553">
    <property type="entry name" value="NAD_synthase"/>
    <property type="match status" value="1"/>
</dbReference>
<dbReference type="Gene3D" id="3.40.50.620">
    <property type="entry name" value="HUPs"/>
    <property type="match status" value="1"/>
</dbReference>
<dbReference type="HAMAP" id="MF_00193">
    <property type="entry name" value="NadE_ammonia_dep"/>
    <property type="match status" value="1"/>
</dbReference>
<dbReference type="InterPro" id="IPR022310">
    <property type="entry name" value="NAD/GMP_synthase"/>
</dbReference>
<dbReference type="InterPro" id="IPR003694">
    <property type="entry name" value="NAD_synthase"/>
</dbReference>
<dbReference type="InterPro" id="IPR022926">
    <property type="entry name" value="NH(3)-dep_NAD(+)_synth"/>
</dbReference>
<dbReference type="InterPro" id="IPR014729">
    <property type="entry name" value="Rossmann-like_a/b/a_fold"/>
</dbReference>
<dbReference type="NCBIfam" id="TIGR00552">
    <property type="entry name" value="nadE"/>
    <property type="match status" value="1"/>
</dbReference>
<dbReference type="NCBIfam" id="NF002048">
    <property type="entry name" value="PRK00876.1"/>
    <property type="match status" value="1"/>
</dbReference>
<dbReference type="PANTHER" id="PTHR23090:SF9">
    <property type="entry name" value="GLUTAMINE-DEPENDENT NAD(+) SYNTHETASE"/>
    <property type="match status" value="1"/>
</dbReference>
<dbReference type="PANTHER" id="PTHR23090">
    <property type="entry name" value="NH 3 /GLUTAMINE-DEPENDENT NAD + SYNTHETASE"/>
    <property type="match status" value="1"/>
</dbReference>
<dbReference type="Pfam" id="PF02540">
    <property type="entry name" value="NAD_synthase"/>
    <property type="match status" value="2"/>
</dbReference>
<dbReference type="SUPFAM" id="SSF52402">
    <property type="entry name" value="Adenine nucleotide alpha hydrolases-like"/>
    <property type="match status" value="1"/>
</dbReference>